<reference key="1">
    <citation type="journal article" date="2008" name="Genome Res.">
        <title>Insights from the complete genome sequence of Mycobacterium marinum on the evolution of Mycobacterium tuberculosis.</title>
        <authorList>
            <person name="Stinear T.P."/>
            <person name="Seemann T."/>
            <person name="Harrison P.F."/>
            <person name="Jenkin G.A."/>
            <person name="Davies J.K."/>
            <person name="Johnson P.D."/>
            <person name="Abdellah Z."/>
            <person name="Arrowsmith C."/>
            <person name="Chillingworth T."/>
            <person name="Churcher C."/>
            <person name="Clarke K."/>
            <person name="Cronin A."/>
            <person name="Davis P."/>
            <person name="Goodhead I."/>
            <person name="Holroyd N."/>
            <person name="Jagels K."/>
            <person name="Lord A."/>
            <person name="Moule S."/>
            <person name="Mungall K."/>
            <person name="Norbertczak H."/>
            <person name="Quail M.A."/>
            <person name="Rabbinowitsch E."/>
            <person name="Walker D."/>
            <person name="White B."/>
            <person name="Whitehead S."/>
            <person name="Small P.L."/>
            <person name="Brosch R."/>
            <person name="Ramakrishnan L."/>
            <person name="Fischbach M.A."/>
            <person name="Parkhill J."/>
            <person name="Cole S.T."/>
        </authorList>
    </citation>
    <scope>NUCLEOTIDE SEQUENCE [LARGE SCALE GENOMIC DNA]</scope>
    <source>
        <strain>ATCC BAA-535 / M</strain>
    </source>
</reference>
<keyword id="KW-0004">4Fe-4S</keyword>
<keyword id="KW-1003">Cell membrane</keyword>
<keyword id="KW-0408">Iron</keyword>
<keyword id="KW-0411">Iron-sulfur</keyword>
<keyword id="KW-0472">Membrane</keyword>
<keyword id="KW-0479">Metal-binding</keyword>
<keyword id="KW-0520">NAD</keyword>
<keyword id="KW-0874">Quinone</keyword>
<keyword id="KW-1185">Reference proteome</keyword>
<keyword id="KW-1278">Translocase</keyword>
<keyword id="KW-0813">Transport</keyword>
<evidence type="ECO:0000255" key="1">
    <source>
        <dbReference type="HAMAP-Rule" id="MF_01356"/>
    </source>
</evidence>
<proteinExistence type="inferred from homology"/>
<sequence>MGLEEQLPGGILLSTVEKVAGYVRKNSLWPATFGLACCAIEMMATAGPRFDIARFGMERFSATPRQADLMIVAGRVSQKMAPVLRQIYDQMAEPKWVLAMGVCASSGGMFNNYAIVQGVDHVVPVDIYLPGCPPRPEMLLHAILKLHEKIQEMPLGVNRERAIAEAEEAAMLARPTIEMRGLLR</sequence>
<dbReference type="EC" id="7.1.1.-" evidence="1"/>
<dbReference type="EMBL" id="CP000854">
    <property type="protein sequence ID" value="ACC39933.1"/>
    <property type="molecule type" value="Genomic_DNA"/>
</dbReference>
<dbReference type="RefSeq" id="WP_011740423.1">
    <property type="nucleotide sequence ID" value="NC_010612.1"/>
</dbReference>
<dbReference type="SMR" id="B2HGE7"/>
<dbReference type="STRING" id="216594.MMAR_1482"/>
<dbReference type="GeneID" id="34341373"/>
<dbReference type="KEGG" id="mmi:MMAR_1482"/>
<dbReference type="eggNOG" id="COG0377">
    <property type="taxonomic scope" value="Bacteria"/>
</dbReference>
<dbReference type="HOGENOM" id="CLU_055737_7_3_11"/>
<dbReference type="OrthoDB" id="9786737at2"/>
<dbReference type="Proteomes" id="UP000001190">
    <property type="component" value="Chromosome"/>
</dbReference>
<dbReference type="GO" id="GO:0005886">
    <property type="term" value="C:plasma membrane"/>
    <property type="evidence" value="ECO:0007669"/>
    <property type="project" value="UniProtKB-SubCell"/>
</dbReference>
<dbReference type="GO" id="GO:0045271">
    <property type="term" value="C:respiratory chain complex I"/>
    <property type="evidence" value="ECO:0007669"/>
    <property type="project" value="TreeGrafter"/>
</dbReference>
<dbReference type="GO" id="GO:0051539">
    <property type="term" value="F:4 iron, 4 sulfur cluster binding"/>
    <property type="evidence" value="ECO:0007669"/>
    <property type="project" value="UniProtKB-KW"/>
</dbReference>
<dbReference type="GO" id="GO:0005506">
    <property type="term" value="F:iron ion binding"/>
    <property type="evidence" value="ECO:0007669"/>
    <property type="project" value="UniProtKB-UniRule"/>
</dbReference>
<dbReference type="GO" id="GO:0008137">
    <property type="term" value="F:NADH dehydrogenase (ubiquinone) activity"/>
    <property type="evidence" value="ECO:0007669"/>
    <property type="project" value="InterPro"/>
</dbReference>
<dbReference type="GO" id="GO:0050136">
    <property type="term" value="F:NADH:ubiquinone reductase (non-electrogenic) activity"/>
    <property type="evidence" value="ECO:0007669"/>
    <property type="project" value="UniProtKB-UniRule"/>
</dbReference>
<dbReference type="GO" id="GO:0048038">
    <property type="term" value="F:quinone binding"/>
    <property type="evidence" value="ECO:0007669"/>
    <property type="project" value="UniProtKB-KW"/>
</dbReference>
<dbReference type="GO" id="GO:0009060">
    <property type="term" value="P:aerobic respiration"/>
    <property type="evidence" value="ECO:0007669"/>
    <property type="project" value="TreeGrafter"/>
</dbReference>
<dbReference type="GO" id="GO:0015990">
    <property type="term" value="P:electron transport coupled proton transport"/>
    <property type="evidence" value="ECO:0007669"/>
    <property type="project" value="TreeGrafter"/>
</dbReference>
<dbReference type="FunFam" id="3.40.50.12280:FF:000004">
    <property type="entry name" value="NADH-quinone oxidoreductase subunit B"/>
    <property type="match status" value="1"/>
</dbReference>
<dbReference type="Gene3D" id="3.40.50.12280">
    <property type="match status" value="1"/>
</dbReference>
<dbReference type="HAMAP" id="MF_01356">
    <property type="entry name" value="NDH1_NuoB"/>
    <property type="match status" value="1"/>
</dbReference>
<dbReference type="InterPro" id="IPR006137">
    <property type="entry name" value="NADH_UbQ_OxRdtase-like_20kDa"/>
</dbReference>
<dbReference type="InterPro" id="IPR006138">
    <property type="entry name" value="NADH_UQ_OxRdtase_20Kd_su"/>
</dbReference>
<dbReference type="NCBIfam" id="TIGR01957">
    <property type="entry name" value="nuoB_fam"/>
    <property type="match status" value="1"/>
</dbReference>
<dbReference type="NCBIfam" id="NF005012">
    <property type="entry name" value="PRK06411.1"/>
    <property type="match status" value="1"/>
</dbReference>
<dbReference type="PANTHER" id="PTHR11995">
    <property type="entry name" value="NADH DEHYDROGENASE"/>
    <property type="match status" value="1"/>
</dbReference>
<dbReference type="PANTHER" id="PTHR11995:SF14">
    <property type="entry name" value="NADH DEHYDROGENASE [UBIQUINONE] IRON-SULFUR PROTEIN 7, MITOCHONDRIAL"/>
    <property type="match status" value="1"/>
</dbReference>
<dbReference type="Pfam" id="PF01058">
    <property type="entry name" value="Oxidored_q6"/>
    <property type="match status" value="1"/>
</dbReference>
<dbReference type="SUPFAM" id="SSF56770">
    <property type="entry name" value="HydA/Nqo6-like"/>
    <property type="match status" value="1"/>
</dbReference>
<dbReference type="PROSITE" id="PS01150">
    <property type="entry name" value="COMPLEX1_20K"/>
    <property type="match status" value="1"/>
</dbReference>
<gene>
    <name evidence="1" type="primary">nuoB</name>
    <name type="ordered locus">MMAR_1482</name>
</gene>
<organism>
    <name type="scientific">Mycobacterium marinum (strain ATCC BAA-535 / M)</name>
    <dbReference type="NCBI Taxonomy" id="216594"/>
    <lineage>
        <taxon>Bacteria</taxon>
        <taxon>Bacillati</taxon>
        <taxon>Actinomycetota</taxon>
        <taxon>Actinomycetes</taxon>
        <taxon>Mycobacteriales</taxon>
        <taxon>Mycobacteriaceae</taxon>
        <taxon>Mycobacterium</taxon>
        <taxon>Mycobacterium ulcerans group</taxon>
    </lineage>
</organism>
<name>NUOB_MYCMM</name>
<protein>
    <recommendedName>
        <fullName evidence="1">NADH-quinone oxidoreductase subunit B</fullName>
        <ecNumber evidence="1">7.1.1.-</ecNumber>
    </recommendedName>
    <alternativeName>
        <fullName evidence="1">NADH dehydrogenase I subunit B</fullName>
    </alternativeName>
    <alternativeName>
        <fullName evidence="1">NDH-1 subunit B</fullName>
    </alternativeName>
</protein>
<feature type="chain" id="PRO_0000376279" description="NADH-quinone oxidoreductase subunit B">
    <location>
        <begin position="1"/>
        <end position="184"/>
    </location>
</feature>
<feature type="binding site" evidence="1">
    <location>
        <position position="37"/>
    </location>
    <ligand>
        <name>[4Fe-4S] cluster</name>
        <dbReference type="ChEBI" id="CHEBI:49883"/>
    </ligand>
</feature>
<feature type="binding site" evidence="1">
    <location>
        <position position="38"/>
    </location>
    <ligand>
        <name>[4Fe-4S] cluster</name>
        <dbReference type="ChEBI" id="CHEBI:49883"/>
    </ligand>
</feature>
<feature type="binding site" evidence="1">
    <location>
        <position position="103"/>
    </location>
    <ligand>
        <name>[4Fe-4S] cluster</name>
        <dbReference type="ChEBI" id="CHEBI:49883"/>
    </ligand>
</feature>
<feature type="binding site" evidence="1">
    <location>
        <position position="132"/>
    </location>
    <ligand>
        <name>[4Fe-4S] cluster</name>
        <dbReference type="ChEBI" id="CHEBI:49883"/>
    </ligand>
</feature>
<accession>B2HGE7</accession>
<comment type="function">
    <text evidence="1">NDH-1 shuttles electrons from NADH, via FMN and iron-sulfur (Fe-S) centers, to quinones in the respiratory chain. The immediate electron acceptor for the enzyme in this species is believed to be a menaquinone. Couples the redox reaction to proton translocation (for every two electrons transferred, four hydrogen ions are translocated across the cytoplasmic membrane), and thus conserves the redox energy in a proton gradient.</text>
</comment>
<comment type="catalytic activity">
    <reaction evidence="1">
        <text>a quinone + NADH + 5 H(+)(in) = a quinol + NAD(+) + 4 H(+)(out)</text>
        <dbReference type="Rhea" id="RHEA:57888"/>
        <dbReference type="ChEBI" id="CHEBI:15378"/>
        <dbReference type="ChEBI" id="CHEBI:24646"/>
        <dbReference type="ChEBI" id="CHEBI:57540"/>
        <dbReference type="ChEBI" id="CHEBI:57945"/>
        <dbReference type="ChEBI" id="CHEBI:132124"/>
    </reaction>
</comment>
<comment type="cofactor">
    <cofactor evidence="1">
        <name>[4Fe-4S] cluster</name>
        <dbReference type="ChEBI" id="CHEBI:49883"/>
    </cofactor>
    <text evidence="1">Binds 1 [4Fe-4S] cluster.</text>
</comment>
<comment type="subunit">
    <text evidence="1">NDH-1 is composed of 14 different subunits. Subunits NuoB, C, D, E, F, and G constitute the peripheral sector of the complex.</text>
</comment>
<comment type="subcellular location">
    <subcellularLocation>
        <location evidence="1">Cell membrane</location>
        <topology evidence="1">Peripheral membrane protein</topology>
        <orientation evidence="1">Cytoplasmic side</orientation>
    </subcellularLocation>
</comment>
<comment type="similarity">
    <text evidence="1">Belongs to the complex I 20 kDa subunit family.</text>
</comment>